<feature type="chain" id="PRO_1000022377" description="Pyridoxine 5'-phosphate synthase">
    <location>
        <begin position="1"/>
        <end position="248"/>
    </location>
</feature>
<feature type="active site" description="Proton acceptor" evidence="1">
    <location>
        <position position="46"/>
    </location>
</feature>
<feature type="active site" description="Proton acceptor" evidence="1">
    <location>
        <position position="73"/>
    </location>
</feature>
<feature type="active site" description="Proton donor" evidence="1">
    <location>
        <position position="194"/>
    </location>
</feature>
<feature type="binding site" evidence="1">
    <location>
        <position position="10"/>
    </location>
    <ligand>
        <name>3-amino-2-oxopropyl phosphate</name>
        <dbReference type="ChEBI" id="CHEBI:57279"/>
    </ligand>
</feature>
<feature type="binding site" evidence="1">
    <location>
        <begin position="12"/>
        <end position="13"/>
    </location>
    <ligand>
        <name>1-deoxy-D-xylulose 5-phosphate</name>
        <dbReference type="ChEBI" id="CHEBI:57792"/>
    </ligand>
</feature>
<feature type="binding site" evidence="1">
    <location>
        <position position="21"/>
    </location>
    <ligand>
        <name>3-amino-2-oxopropyl phosphate</name>
        <dbReference type="ChEBI" id="CHEBI:57279"/>
    </ligand>
</feature>
<feature type="binding site" evidence="1">
    <location>
        <position position="48"/>
    </location>
    <ligand>
        <name>1-deoxy-D-xylulose 5-phosphate</name>
        <dbReference type="ChEBI" id="CHEBI:57792"/>
    </ligand>
</feature>
<feature type="binding site" evidence="1">
    <location>
        <position position="53"/>
    </location>
    <ligand>
        <name>1-deoxy-D-xylulose 5-phosphate</name>
        <dbReference type="ChEBI" id="CHEBI:57792"/>
    </ligand>
</feature>
<feature type="binding site" evidence="1">
    <location>
        <position position="103"/>
    </location>
    <ligand>
        <name>1-deoxy-D-xylulose 5-phosphate</name>
        <dbReference type="ChEBI" id="CHEBI:57792"/>
    </ligand>
</feature>
<feature type="binding site" evidence="1">
    <location>
        <position position="195"/>
    </location>
    <ligand>
        <name>3-amino-2-oxopropyl phosphate</name>
        <dbReference type="ChEBI" id="CHEBI:57279"/>
    </ligand>
</feature>
<feature type="binding site" evidence="1">
    <location>
        <begin position="216"/>
        <end position="217"/>
    </location>
    <ligand>
        <name>3-amino-2-oxopropyl phosphate</name>
        <dbReference type="ChEBI" id="CHEBI:57279"/>
    </ligand>
</feature>
<feature type="site" description="Transition state stabilizer" evidence="1">
    <location>
        <position position="154"/>
    </location>
</feature>
<evidence type="ECO:0000255" key="1">
    <source>
        <dbReference type="HAMAP-Rule" id="MF_00279"/>
    </source>
</evidence>
<name>PDXJ_LEGPC</name>
<organism>
    <name type="scientific">Legionella pneumophila (strain Corby)</name>
    <dbReference type="NCBI Taxonomy" id="400673"/>
    <lineage>
        <taxon>Bacteria</taxon>
        <taxon>Pseudomonadati</taxon>
        <taxon>Pseudomonadota</taxon>
        <taxon>Gammaproteobacteria</taxon>
        <taxon>Legionellales</taxon>
        <taxon>Legionellaceae</taxon>
        <taxon>Legionella</taxon>
    </lineage>
</organism>
<comment type="function">
    <text evidence="1">Catalyzes the complicated ring closure reaction between the two acyclic compounds 1-deoxy-D-xylulose-5-phosphate (DXP) and 3-amino-2-oxopropyl phosphate (1-amino-acetone-3-phosphate or AAP) to form pyridoxine 5'-phosphate (PNP) and inorganic phosphate.</text>
</comment>
<comment type="catalytic activity">
    <reaction evidence="1">
        <text>3-amino-2-oxopropyl phosphate + 1-deoxy-D-xylulose 5-phosphate = pyridoxine 5'-phosphate + phosphate + 2 H2O + H(+)</text>
        <dbReference type="Rhea" id="RHEA:15265"/>
        <dbReference type="ChEBI" id="CHEBI:15377"/>
        <dbReference type="ChEBI" id="CHEBI:15378"/>
        <dbReference type="ChEBI" id="CHEBI:43474"/>
        <dbReference type="ChEBI" id="CHEBI:57279"/>
        <dbReference type="ChEBI" id="CHEBI:57792"/>
        <dbReference type="ChEBI" id="CHEBI:58589"/>
        <dbReference type="EC" id="2.6.99.2"/>
    </reaction>
</comment>
<comment type="pathway">
    <text evidence="1">Cofactor biosynthesis; pyridoxine 5'-phosphate biosynthesis; pyridoxine 5'-phosphate from D-erythrose 4-phosphate: step 5/5.</text>
</comment>
<comment type="subunit">
    <text evidence="1">Homooctamer; tetramer of dimers.</text>
</comment>
<comment type="subcellular location">
    <subcellularLocation>
        <location evidence="1">Cytoplasm</location>
    </subcellularLocation>
</comment>
<comment type="similarity">
    <text evidence="1">Belongs to the PNP synthase family.</text>
</comment>
<proteinExistence type="inferred from homology"/>
<sequence length="248" mass="27829">MNKELLLGVNIDHIATIRQARGTRYPDPVQAAMDAEEAGADGITLHMREDLRHIQARDVRLIKQVLQTRMNLELAVTEAMLDFAEEISPEHACLVPEKREELTTEGGLDILTHRNVVEKAVRRLQLMGSEVSLFIDPDKEQIRAAVDVGAPVIELHTGCYADATSEEKQHYELQRIKEAAEFAASLNLVVNAGHGLHYHNVKPIAAIRELNELNIGHAIIARALFCGLKEAVRHMRQLMQEARLYVND</sequence>
<reference key="1">
    <citation type="submission" date="2006-11" db="EMBL/GenBank/DDBJ databases">
        <title>Identification and characterization of a new conjugation/ type IVA secretion system (trb/tra) of L. pneumophila Corby localized on a mobile genomic island.</title>
        <authorList>
            <person name="Gloeckner G."/>
            <person name="Albert-Weissenberger C."/>
            <person name="Weinmann E."/>
            <person name="Jacobi S."/>
            <person name="Schunder E."/>
            <person name="Steinert M."/>
            <person name="Buchrieser C."/>
            <person name="Hacker J."/>
            <person name="Heuner K."/>
        </authorList>
    </citation>
    <scope>NUCLEOTIDE SEQUENCE [LARGE SCALE GENOMIC DNA]</scope>
    <source>
        <strain>Corby</strain>
    </source>
</reference>
<protein>
    <recommendedName>
        <fullName evidence="1">Pyridoxine 5'-phosphate synthase</fullName>
        <shortName evidence="1">PNP synthase</shortName>
        <ecNumber evidence="1">2.6.99.2</ecNumber>
    </recommendedName>
</protein>
<gene>
    <name evidence="1" type="primary">pdxJ</name>
    <name type="ordered locus">LPC_2343</name>
</gene>
<keyword id="KW-0963">Cytoplasm</keyword>
<keyword id="KW-0664">Pyridoxine biosynthesis</keyword>
<keyword id="KW-0808">Transferase</keyword>
<dbReference type="EC" id="2.6.99.2" evidence="1"/>
<dbReference type="EMBL" id="CP000675">
    <property type="protein sequence ID" value="ABQ56265.1"/>
    <property type="molecule type" value="Genomic_DNA"/>
</dbReference>
<dbReference type="RefSeq" id="WP_011946036.1">
    <property type="nucleotide sequence ID" value="NZ_JAPMSS010000002.1"/>
</dbReference>
<dbReference type="SMR" id="A5IFW5"/>
<dbReference type="GeneID" id="57034934"/>
<dbReference type="KEGG" id="lpc:LPC_2343"/>
<dbReference type="HOGENOM" id="CLU_074563_0_0_6"/>
<dbReference type="UniPathway" id="UPA00244">
    <property type="reaction ID" value="UER00313"/>
</dbReference>
<dbReference type="GO" id="GO:0005829">
    <property type="term" value="C:cytosol"/>
    <property type="evidence" value="ECO:0007669"/>
    <property type="project" value="TreeGrafter"/>
</dbReference>
<dbReference type="GO" id="GO:0033856">
    <property type="term" value="F:pyridoxine 5'-phosphate synthase activity"/>
    <property type="evidence" value="ECO:0007669"/>
    <property type="project" value="UniProtKB-EC"/>
</dbReference>
<dbReference type="GO" id="GO:0008615">
    <property type="term" value="P:pyridoxine biosynthetic process"/>
    <property type="evidence" value="ECO:0007669"/>
    <property type="project" value="UniProtKB-UniRule"/>
</dbReference>
<dbReference type="CDD" id="cd00003">
    <property type="entry name" value="PNPsynthase"/>
    <property type="match status" value="1"/>
</dbReference>
<dbReference type="FunFam" id="3.20.20.70:FF:000042">
    <property type="entry name" value="Pyridoxine 5'-phosphate synthase"/>
    <property type="match status" value="1"/>
</dbReference>
<dbReference type="Gene3D" id="3.20.20.70">
    <property type="entry name" value="Aldolase class I"/>
    <property type="match status" value="1"/>
</dbReference>
<dbReference type="HAMAP" id="MF_00279">
    <property type="entry name" value="PdxJ"/>
    <property type="match status" value="1"/>
</dbReference>
<dbReference type="InterPro" id="IPR013785">
    <property type="entry name" value="Aldolase_TIM"/>
</dbReference>
<dbReference type="InterPro" id="IPR004569">
    <property type="entry name" value="PyrdxlP_synth_PdxJ"/>
</dbReference>
<dbReference type="InterPro" id="IPR036130">
    <property type="entry name" value="Pyridoxine-5'_phos_synth"/>
</dbReference>
<dbReference type="NCBIfam" id="TIGR00559">
    <property type="entry name" value="pdxJ"/>
    <property type="match status" value="1"/>
</dbReference>
<dbReference type="NCBIfam" id="NF003623">
    <property type="entry name" value="PRK05265.1-1"/>
    <property type="match status" value="1"/>
</dbReference>
<dbReference type="NCBIfam" id="NF003625">
    <property type="entry name" value="PRK05265.1-3"/>
    <property type="match status" value="1"/>
</dbReference>
<dbReference type="NCBIfam" id="NF003627">
    <property type="entry name" value="PRK05265.1-5"/>
    <property type="match status" value="1"/>
</dbReference>
<dbReference type="PANTHER" id="PTHR30456">
    <property type="entry name" value="PYRIDOXINE 5'-PHOSPHATE SYNTHASE"/>
    <property type="match status" value="1"/>
</dbReference>
<dbReference type="PANTHER" id="PTHR30456:SF0">
    <property type="entry name" value="PYRIDOXINE 5'-PHOSPHATE SYNTHASE"/>
    <property type="match status" value="1"/>
</dbReference>
<dbReference type="Pfam" id="PF03740">
    <property type="entry name" value="PdxJ"/>
    <property type="match status" value="1"/>
</dbReference>
<dbReference type="SUPFAM" id="SSF63892">
    <property type="entry name" value="Pyridoxine 5'-phosphate synthase"/>
    <property type="match status" value="1"/>
</dbReference>
<accession>A5IFW5</accession>